<protein>
    <recommendedName>
        <fullName>Upstream stimulatory factor 1</fullName>
    </recommendedName>
</protein>
<accession>Q6XBT4</accession>
<gene>
    <name type="primary">USF1</name>
</gene>
<feature type="chain" id="PRO_0000244425" description="Upstream stimulatory factor 1">
    <location>
        <begin position="1"/>
        <end position="310"/>
    </location>
</feature>
<feature type="domain" description="bHLH" evidence="3">
    <location>
        <begin position="199"/>
        <end position="254"/>
    </location>
</feature>
<feature type="region of interest" description="Disordered" evidence="4">
    <location>
        <begin position="1"/>
        <end position="26"/>
    </location>
</feature>
<feature type="region of interest" description="Disordered" evidence="4">
    <location>
        <begin position="171"/>
        <end position="209"/>
    </location>
</feature>
<feature type="region of interest" description="Leucine-zipper">
    <location>
        <begin position="271"/>
        <end position="292"/>
    </location>
</feature>
<feature type="compositionally biased region" description="Polar residues" evidence="4">
    <location>
        <begin position="1"/>
        <end position="17"/>
    </location>
</feature>
<feature type="compositionally biased region" description="Basic and acidic residues" evidence="4">
    <location>
        <begin position="190"/>
        <end position="209"/>
    </location>
</feature>
<feature type="cross-link" description="Glycyl lysine isopeptide (Lys-Gly) (interchain with G-Cter in SUMO2)" evidence="2">
    <location>
        <position position="306"/>
    </location>
</feature>
<evidence type="ECO:0000250" key="1"/>
<evidence type="ECO:0000250" key="2">
    <source>
        <dbReference type="UniProtKB" id="P22415"/>
    </source>
</evidence>
<evidence type="ECO:0000255" key="3">
    <source>
        <dbReference type="PROSITE-ProRule" id="PRU00981"/>
    </source>
</evidence>
<evidence type="ECO:0000256" key="4">
    <source>
        <dbReference type="SAM" id="MobiDB-lite"/>
    </source>
</evidence>
<reference key="1">
    <citation type="journal article" date="2004" name="J. Biol. Chem.">
        <title>Molecular characterization and role of bovine upstream stimulatory factor 1 and 2 in the regulation of the prostaglandin G/H synthase-2 promoter in granulosa cells.</title>
        <authorList>
            <person name="Sayasith K."/>
            <person name="Bouchard N."/>
            <person name="Sawadogo M."/>
            <person name="Lussier J.G."/>
            <person name="Sirois J."/>
        </authorList>
    </citation>
    <scope>NUCLEOTIDE SEQUENCE [MRNA]</scope>
    <source>
        <tissue>Ovarian follicle</tissue>
    </source>
</reference>
<reference key="2">
    <citation type="submission" date="2006-04" db="EMBL/GenBank/DDBJ databases">
        <authorList>
            <consortium name="NIH - Mammalian Gene Collection (MGC) project"/>
        </authorList>
    </citation>
    <scope>NUCLEOTIDE SEQUENCE [LARGE SCALE MRNA]</scope>
    <source>
        <strain>Hereford</strain>
        <tissue>Uterus</tissue>
    </source>
</reference>
<name>USF1_BOVIN</name>
<organism>
    <name type="scientific">Bos taurus</name>
    <name type="common">Bovine</name>
    <dbReference type="NCBI Taxonomy" id="9913"/>
    <lineage>
        <taxon>Eukaryota</taxon>
        <taxon>Metazoa</taxon>
        <taxon>Chordata</taxon>
        <taxon>Craniata</taxon>
        <taxon>Vertebrata</taxon>
        <taxon>Euteleostomi</taxon>
        <taxon>Mammalia</taxon>
        <taxon>Eutheria</taxon>
        <taxon>Laurasiatheria</taxon>
        <taxon>Artiodactyla</taxon>
        <taxon>Ruminantia</taxon>
        <taxon>Pecora</taxon>
        <taxon>Bovidae</taxon>
        <taxon>Bovinae</taxon>
        <taxon>Bos</taxon>
    </lineage>
</organism>
<sequence length="310" mass="33497">MKGQQKTAETEEGTVQIQEGAVATGEDPTSVAIASIQSAATFPDPNVKYVFRTENGGQVMYRVIQVSEGQLDGQTEGTGAISGYPATQSMTQAVIQGAFTSDDAVDTEGTAAETHYTYFPSTAVGDGAGGTTSGSTAAVVTTQGSEALLGQATPPGTGQFFVMMSPQEVLQGGSQRSIAPRTHPYSPKSEAPRTTRDEKRRAQHNEVERRRRDKINNWIVQLSKIIPDCSMESTKSGQSKGGILSKACDYIQELRQSNHRLSEELQGLDQLQLDNDVLRQQVEDLKNKNLLLRAQLRHHGVEVVIKSDSN</sequence>
<dbReference type="EMBL" id="AY241931">
    <property type="protein sequence ID" value="AAP43041.1"/>
    <property type="molecule type" value="mRNA"/>
</dbReference>
<dbReference type="EMBL" id="BC114684">
    <property type="protein sequence ID" value="AAI14685.1"/>
    <property type="molecule type" value="mRNA"/>
</dbReference>
<dbReference type="RefSeq" id="NP_001001161.1">
    <property type="nucleotide sequence ID" value="NM_001001161.2"/>
</dbReference>
<dbReference type="RefSeq" id="XP_005203512.1">
    <property type="nucleotide sequence ID" value="XM_005203455.2"/>
</dbReference>
<dbReference type="RefSeq" id="XP_005203513.1">
    <property type="nucleotide sequence ID" value="XM_005203456.3"/>
</dbReference>
<dbReference type="RefSeq" id="XP_005203514.1">
    <property type="nucleotide sequence ID" value="XM_005203457.3"/>
</dbReference>
<dbReference type="RefSeq" id="XP_015316732.1">
    <property type="nucleotide sequence ID" value="XM_015461246.1"/>
</dbReference>
<dbReference type="RefSeq" id="XP_024841108.1">
    <property type="nucleotide sequence ID" value="XM_024985340.2"/>
</dbReference>
<dbReference type="RefSeq" id="XP_024841112.1">
    <property type="nucleotide sequence ID" value="XM_024985344.2"/>
</dbReference>
<dbReference type="RefSeq" id="XP_024841117.1">
    <property type="nucleotide sequence ID" value="XM_024985349.2"/>
</dbReference>
<dbReference type="RefSeq" id="XP_024841124.1">
    <property type="nucleotide sequence ID" value="XM_024985356.2"/>
</dbReference>
<dbReference type="SMR" id="Q6XBT4"/>
<dbReference type="FunCoup" id="Q6XBT4">
    <property type="interactions" value="1821"/>
</dbReference>
<dbReference type="STRING" id="9913.ENSBTAP00000023760"/>
<dbReference type="PaxDb" id="9913-ENSBTAP00000023760"/>
<dbReference type="Ensembl" id="ENSBTAT00000023760.6">
    <property type="protein sequence ID" value="ENSBTAP00000023760.5"/>
    <property type="gene ID" value="ENSBTAG00000017873.6"/>
</dbReference>
<dbReference type="GeneID" id="407239"/>
<dbReference type="KEGG" id="bta:407239"/>
<dbReference type="CTD" id="7391"/>
<dbReference type="VEuPathDB" id="HostDB:ENSBTAG00000017873"/>
<dbReference type="VGNC" id="VGNC:55695">
    <property type="gene designation" value="USF1"/>
</dbReference>
<dbReference type="eggNOG" id="KOG1318">
    <property type="taxonomic scope" value="Eukaryota"/>
</dbReference>
<dbReference type="GeneTree" id="ENSGT00940000157083"/>
<dbReference type="HOGENOM" id="CLU_070485_0_0_1"/>
<dbReference type="InParanoid" id="Q6XBT4"/>
<dbReference type="OMA" id="GAQVMYR"/>
<dbReference type="OrthoDB" id="690068at2759"/>
<dbReference type="TreeFam" id="TF323338"/>
<dbReference type="Reactome" id="R-BTA-9018519">
    <property type="pathway name" value="Estrogen-dependent gene expression"/>
</dbReference>
<dbReference type="Reactome" id="R-BTA-9824585">
    <property type="pathway name" value="Regulation of MITF-M-dependent genes involved in pigmentation"/>
</dbReference>
<dbReference type="Proteomes" id="UP000009136">
    <property type="component" value="Chromosome 3"/>
</dbReference>
<dbReference type="Bgee" id="ENSBTAG00000017873">
    <property type="expression patterns" value="Expressed in leukocyte and 106 other cell types or tissues"/>
</dbReference>
<dbReference type="GO" id="GO:0000785">
    <property type="term" value="C:chromatin"/>
    <property type="evidence" value="ECO:0007669"/>
    <property type="project" value="Ensembl"/>
</dbReference>
<dbReference type="GO" id="GO:0005794">
    <property type="term" value="C:Golgi apparatus"/>
    <property type="evidence" value="ECO:0007669"/>
    <property type="project" value="Ensembl"/>
</dbReference>
<dbReference type="GO" id="GO:0005654">
    <property type="term" value="C:nucleoplasm"/>
    <property type="evidence" value="ECO:0007669"/>
    <property type="project" value="Ensembl"/>
</dbReference>
<dbReference type="GO" id="GO:0005667">
    <property type="term" value="C:transcription regulator complex"/>
    <property type="evidence" value="ECO:0007669"/>
    <property type="project" value="Ensembl"/>
</dbReference>
<dbReference type="GO" id="GO:0043425">
    <property type="term" value="F:bHLH transcription factor binding"/>
    <property type="evidence" value="ECO:0007669"/>
    <property type="project" value="Ensembl"/>
</dbReference>
<dbReference type="GO" id="GO:0001228">
    <property type="term" value="F:DNA-binding transcription activator activity, RNA polymerase II-specific"/>
    <property type="evidence" value="ECO:0007669"/>
    <property type="project" value="Ensembl"/>
</dbReference>
<dbReference type="GO" id="GO:0000981">
    <property type="term" value="F:DNA-binding transcription factor activity, RNA polymerase II-specific"/>
    <property type="evidence" value="ECO:0000318"/>
    <property type="project" value="GO_Central"/>
</dbReference>
<dbReference type="GO" id="GO:0042826">
    <property type="term" value="F:histone deacetylase binding"/>
    <property type="evidence" value="ECO:0007669"/>
    <property type="project" value="Ensembl"/>
</dbReference>
<dbReference type="GO" id="GO:0046982">
    <property type="term" value="F:protein heterodimerization activity"/>
    <property type="evidence" value="ECO:0007669"/>
    <property type="project" value="Ensembl"/>
</dbReference>
<dbReference type="GO" id="GO:0042803">
    <property type="term" value="F:protein homodimerization activity"/>
    <property type="evidence" value="ECO:0007669"/>
    <property type="project" value="Ensembl"/>
</dbReference>
<dbReference type="GO" id="GO:0019901">
    <property type="term" value="F:protein kinase binding"/>
    <property type="evidence" value="ECO:0007669"/>
    <property type="project" value="Ensembl"/>
</dbReference>
<dbReference type="GO" id="GO:0044877">
    <property type="term" value="F:protein-containing complex binding"/>
    <property type="evidence" value="ECO:0007669"/>
    <property type="project" value="Ensembl"/>
</dbReference>
<dbReference type="GO" id="GO:0000978">
    <property type="term" value="F:RNA polymerase II cis-regulatory region sequence-specific DNA binding"/>
    <property type="evidence" value="ECO:0000318"/>
    <property type="project" value="GO_Central"/>
</dbReference>
<dbReference type="GO" id="GO:0032869">
    <property type="term" value="P:cellular response to insulin stimulus"/>
    <property type="evidence" value="ECO:0007669"/>
    <property type="project" value="Ensembl"/>
</dbReference>
<dbReference type="GO" id="GO:0010255">
    <property type="term" value="P:glucose mediated signaling pathway"/>
    <property type="evidence" value="ECO:0007669"/>
    <property type="project" value="Ensembl"/>
</dbReference>
<dbReference type="GO" id="GO:0019086">
    <property type="term" value="P:late viral transcription"/>
    <property type="evidence" value="ECO:0007669"/>
    <property type="project" value="Ensembl"/>
</dbReference>
<dbReference type="GO" id="GO:0055088">
    <property type="term" value="P:lipid homeostasis"/>
    <property type="evidence" value="ECO:0007669"/>
    <property type="project" value="Ensembl"/>
</dbReference>
<dbReference type="GO" id="GO:0000432">
    <property type="term" value="P:positive regulation of transcription from RNA polymerase II promoter by glucose"/>
    <property type="evidence" value="ECO:0007669"/>
    <property type="project" value="Ensembl"/>
</dbReference>
<dbReference type="GO" id="GO:0006357">
    <property type="term" value="P:regulation of transcription by RNA polymerase II"/>
    <property type="evidence" value="ECO:0000318"/>
    <property type="project" value="GO_Central"/>
</dbReference>
<dbReference type="GO" id="GO:0001666">
    <property type="term" value="P:response to hypoxia"/>
    <property type="evidence" value="ECO:0007669"/>
    <property type="project" value="Ensembl"/>
</dbReference>
<dbReference type="GO" id="GO:0009411">
    <property type="term" value="P:response to UV"/>
    <property type="evidence" value="ECO:0007669"/>
    <property type="project" value="Ensembl"/>
</dbReference>
<dbReference type="CDD" id="cd18924">
    <property type="entry name" value="bHLHzip_USF1"/>
    <property type="match status" value="1"/>
</dbReference>
<dbReference type="FunFam" id="4.10.280.10:FF:000067">
    <property type="entry name" value="upstream stimulatory factor 1 isoform X1"/>
    <property type="match status" value="1"/>
</dbReference>
<dbReference type="Gene3D" id="4.10.280.10">
    <property type="entry name" value="Helix-loop-helix DNA-binding domain"/>
    <property type="match status" value="1"/>
</dbReference>
<dbReference type="InterPro" id="IPR011598">
    <property type="entry name" value="bHLH_dom"/>
</dbReference>
<dbReference type="InterPro" id="IPR036638">
    <property type="entry name" value="HLH_DNA-bd_sf"/>
</dbReference>
<dbReference type="InterPro" id="IPR051732">
    <property type="entry name" value="USF"/>
</dbReference>
<dbReference type="PANTHER" id="PTHR46117">
    <property type="entry name" value="FI24210P1"/>
    <property type="match status" value="1"/>
</dbReference>
<dbReference type="PANTHER" id="PTHR46117:SF1">
    <property type="entry name" value="UPSTREAM STIMULATORY FACTOR 1"/>
    <property type="match status" value="1"/>
</dbReference>
<dbReference type="Pfam" id="PF00010">
    <property type="entry name" value="HLH"/>
    <property type="match status" value="1"/>
</dbReference>
<dbReference type="SMART" id="SM00353">
    <property type="entry name" value="HLH"/>
    <property type="match status" value="1"/>
</dbReference>
<dbReference type="SUPFAM" id="SSF47459">
    <property type="entry name" value="HLH, helix-loop-helix DNA-binding domain"/>
    <property type="match status" value="1"/>
</dbReference>
<dbReference type="PROSITE" id="PS50888">
    <property type="entry name" value="BHLH"/>
    <property type="match status" value="1"/>
</dbReference>
<comment type="function">
    <text evidence="1">Transcription factor that binds to a symmetrical DNA sequence (E-boxes) (5'-CACGTG-3') that is found in a variety of viral and cellular promoters.</text>
</comment>
<comment type="subunit">
    <text evidence="1">Efficient DNA binding requires dimerization with another bHLH protein. Binds DNA as a homodimer or a heterodimer (USF1/USF2) (By similarity).</text>
</comment>
<comment type="subcellular location">
    <subcellularLocation>
        <location evidence="3">Nucleus</location>
    </subcellularLocation>
</comment>
<keyword id="KW-0238">DNA-binding</keyword>
<keyword id="KW-1017">Isopeptide bond</keyword>
<keyword id="KW-0539">Nucleus</keyword>
<keyword id="KW-1185">Reference proteome</keyword>
<keyword id="KW-0804">Transcription</keyword>
<keyword id="KW-0805">Transcription regulation</keyword>
<keyword id="KW-0832">Ubl conjugation</keyword>
<proteinExistence type="evidence at transcript level"/>